<protein>
    <recommendedName>
        <fullName evidence="1">Chorismate synthase</fullName>
        <shortName evidence="1">CS</shortName>
        <ecNumber evidence="1">4.2.3.5</ecNumber>
    </recommendedName>
    <alternativeName>
        <fullName evidence="1">5-enolpyruvylshikimate-3-phosphate phospholyase</fullName>
    </alternativeName>
</protein>
<gene>
    <name evidence="1" type="primary">aroC</name>
    <name type="ordered locus">Veis_2580</name>
</gene>
<keyword id="KW-0028">Amino-acid biosynthesis</keyword>
<keyword id="KW-0057">Aromatic amino acid biosynthesis</keyword>
<keyword id="KW-0274">FAD</keyword>
<keyword id="KW-0285">Flavoprotein</keyword>
<keyword id="KW-0288">FMN</keyword>
<keyword id="KW-0456">Lyase</keyword>
<keyword id="KW-0521">NADP</keyword>
<keyword id="KW-1185">Reference proteome</keyword>
<evidence type="ECO:0000255" key="1">
    <source>
        <dbReference type="HAMAP-Rule" id="MF_00300"/>
    </source>
</evidence>
<organism>
    <name type="scientific">Verminephrobacter eiseniae (strain EF01-2)</name>
    <dbReference type="NCBI Taxonomy" id="391735"/>
    <lineage>
        <taxon>Bacteria</taxon>
        <taxon>Pseudomonadati</taxon>
        <taxon>Pseudomonadota</taxon>
        <taxon>Betaproteobacteria</taxon>
        <taxon>Burkholderiales</taxon>
        <taxon>Comamonadaceae</taxon>
        <taxon>Verminephrobacter</taxon>
    </lineage>
</organism>
<proteinExistence type="inferred from homology"/>
<dbReference type="EC" id="4.2.3.5" evidence="1"/>
<dbReference type="EMBL" id="CP000542">
    <property type="protein sequence ID" value="ABM58325.1"/>
    <property type="molecule type" value="Genomic_DNA"/>
</dbReference>
<dbReference type="RefSeq" id="WP_011810326.1">
    <property type="nucleotide sequence ID" value="NC_008786.1"/>
</dbReference>
<dbReference type="SMR" id="A1WL18"/>
<dbReference type="STRING" id="391735.Veis_2580"/>
<dbReference type="GeneID" id="76461106"/>
<dbReference type="KEGG" id="vei:Veis_2580"/>
<dbReference type="eggNOG" id="COG0082">
    <property type="taxonomic scope" value="Bacteria"/>
</dbReference>
<dbReference type="HOGENOM" id="CLU_034547_0_2_4"/>
<dbReference type="OrthoDB" id="9771806at2"/>
<dbReference type="UniPathway" id="UPA00053">
    <property type="reaction ID" value="UER00090"/>
</dbReference>
<dbReference type="Proteomes" id="UP000000374">
    <property type="component" value="Chromosome"/>
</dbReference>
<dbReference type="GO" id="GO:0005829">
    <property type="term" value="C:cytosol"/>
    <property type="evidence" value="ECO:0007669"/>
    <property type="project" value="TreeGrafter"/>
</dbReference>
<dbReference type="GO" id="GO:0004107">
    <property type="term" value="F:chorismate synthase activity"/>
    <property type="evidence" value="ECO:0007669"/>
    <property type="project" value="UniProtKB-UniRule"/>
</dbReference>
<dbReference type="GO" id="GO:0010181">
    <property type="term" value="F:FMN binding"/>
    <property type="evidence" value="ECO:0007669"/>
    <property type="project" value="TreeGrafter"/>
</dbReference>
<dbReference type="GO" id="GO:0008652">
    <property type="term" value="P:amino acid biosynthetic process"/>
    <property type="evidence" value="ECO:0007669"/>
    <property type="project" value="UniProtKB-KW"/>
</dbReference>
<dbReference type="GO" id="GO:0009073">
    <property type="term" value="P:aromatic amino acid family biosynthetic process"/>
    <property type="evidence" value="ECO:0007669"/>
    <property type="project" value="UniProtKB-KW"/>
</dbReference>
<dbReference type="GO" id="GO:0009423">
    <property type="term" value="P:chorismate biosynthetic process"/>
    <property type="evidence" value="ECO:0007669"/>
    <property type="project" value="UniProtKB-UniRule"/>
</dbReference>
<dbReference type="CDD" id="cd07304">
    <property type="entry name" value="Chorismate_synthase"/>
    <property type="match status" value="1"/>
</dbReference>
<dbReference type="Gene3D" id="3.60.150.10">
    <property type="entry name" value="Chorismate synthase AroC"/>
    <property type="match status" value="1"/>
</dbReference>
<dbReference type="HAMAP" id="MF_00300">
    <property type="entry name" value="Chorismate_synth"/>
    <property type="match status" value="1"/>
</dbReference>
<dbReference type="InterPro" id="IPR000453">
    <property type="entry name" value="Chorismate_synth"/>
</dbReference>
<dbReference type="InterPro" id="IPR035904">
    <property type="entry name" value="Chorismate_synth_AroC_sf"/>
</dbReference>
<dbReference type="InterPro" id="IPR020541">
    <property type="entry name" value="Chorismate_synthase_CS"/>
</dbReference>
<dbReference type="NCBIfam" id="TIGR00033">
    <property type="entry name" value="aroC"/>
    <property type="match status" value="1"/>
</dbReference>
<dbReference type="NCBIfam" id="NF003793">
    <property type="entry name" value="PRK05382.1"/>
    <property type="match status" value="1"/>
</dbReference>
<dbReference type="PANTHER" id="PTHR21085">
    <property type="entry name" value="CHORISMATE SYNTHASE"/>
    <property type="match status" value="1"/>
</dbReference>
<dbReference type="PANTHER" id="PTHR21085:SF0">
    <property type="entry name" value="CHORISMATE SYNTHASE"/>
    <property type="match status" value="1"/>
</dbReference>
<dbReference type="Pfam" id="PF01264">
    <property type="entry name" value="Chorismate_synt"/>
    <property type="match status" value="1"/>
</dbReference>
<dbReference type="PIRSF" id="PIRSF001456">
    <property type="entry name" value="Chorismate_synth"/>
    <property type="match status" value="1"/>
</dbReference>
<dbReference type="SUPFAM" id="SSF103263">
    <property type="entry name" value="Chorismate synthase, AroC"/>
    <property type="match status" value="1"/>
</dbReference>
<dbReference type="PROSITE" id="PS00787">
    <property type="entry name" value="CHORISMATE_SYNTHASE_1"/>
    <property type="match status" value="1"/>
</dbReference>
<dbReference type="PROSITE" id="PS00788">
    <property type="entry name" value="CHORISMATE_SYNTHASE_2"/>
    <property type="match status" value="1"/>
</dbReference>
<dbReference type="PROSITE" id="PS00789">
    <property type="entry name" value="CHORISMATE_SYNTHASE_3"/>
    <property type="match status" value="1"/>
</dbReference>
<comment type="function">
    <text evidence="1">Catalyzes the anti-1,4-elimination of the C-3 phosphate and the C-6 proR hydrogen from 5-enolpyruvylshikimate-3-phosphate (EPSP) to yield chorismate, which is the branch point compound that serves as the starting substrate for the three terminal pathways of aromatic amino acid biosynthesis. This reaction introduces a second double bond into the aromatic ring system.</text>
</comment>
<comment type="catalytic activity">
    <reaction evidence="1">
        <text>5-O-(1-carboxyvinyl)-3-phosphoshikimate = chorismate + phosphate</text>
        <dbReference type="Rhea" id="RHEA:21020"/>
        <dbReference type="ChEBI" id="CHEBI:29748"/>
        <dbReference type="ChEBI" id="CHEBI:43474"/>
        <dbReference type="ChEBI" id="CHEBI:57701"/>
        <dbReference type="EC" id="4.2.3.5"/>
    </reaction>
</comment>
<comment type="cofactor">
    <cofactor evidence="1">
        <name>FMNH2</name>
        <dbReference type="ChEBI" id="CHEBI:57618"/>
    </cofactor>
    <text evidence="1">Reduced FMN (FMNH(2)).</text>
</comment>
<comment type="pathway">
    <text evidence="1">Metabolic intermediate biosynthesis; chorismate biosynthesis; chorismate from D-erythrose 4-phosphate and phosphoenolpyruvate: step 7/7.</text>
</comment>
<comment type="subunit">
    <text evidence="1">Homotetramer.</text>
</comment>
<comment type="similarity">
    <text evidence="1">Belongs to the chorismate synthase family.</text>
</comment>
<accession>A1WL18</accession>
<sequence length="365" mass="38895">MSGNTFGTLFAVTNFGESHGPAIGCVIDGCPPGMPLSEADIQTDLDRRRPGSSRHVTQRNEPDAVEILSGIYQGQTTGTPIALLIRNTDQRSKDYSRSAESFRPGHADYSYWRKYGIRDPRGGGRSSARLTAPTVAAGAVAKKWLALQYGTRFRACMTQLGELPIPFEHWDHVRNNPFFAPVADVAQYEQYIDALRKAGDSCGARIRVQATGMPVGLGEPLYDKLDADIAYALMGLNAVKGVEIGAGFASVAQRGTVHGDTMTPQGFRSNYAGGVLGGISTGQDLELSIAIKPTSSILSPSASIDIHGHSIEVSTKGRHDPCVGIRATPIAEALLALVVMDHALRHRAQCADVVLPLPPIPAAPA</sequence>
<name>AROC_VEREI</name>
<reference key="1">
    <citation type="submission" date="2006-12" db="EMBL/GenBank/DDBJ databases">
        <title>Complete sequence of chromosome 1 of Verminephrobacter eiseniae EF01-2.</title>
        <authorList>
            <person name="Copeland A."/>
            <person name="Lucas S."/>
            <person name="Lapidus A."/>
            <person name="Barry K."/>
            <person name="Detter J.C."/>
            <person name="Glavina del Rio T."/>
            <person name="Dalin E."/>
            <person name="Tice H."/>
            <person name="Pitluck S."/>
            <person name="Chertkov O."/>
            <person name="Brettin T."/>
            <person name="Bruce D."/>
            <person name="Han C."/>
            <person name="Tapia R."/>
            <person name="Gilna P."/>
            <person name="Schmutz J."/>
            <person name="Larimer F."/>
            <person name="Land M."/>
            <person name="Hauser L."/>
            <person name="Kyrpides N."/>
            <person name="Kim E."/>
            <person name="Stahl D."/>
            <person name="Richardson P."/>
        </authorList>
    </citation>
    <scope>NUCLEOTIDE SEQUENCE [LARGE SCALE GENOMIC DNA]</scope>
    <source>
        <strain>EF01-2</strain>
    </source>
</reference>
<feature type="chain" id="PRO_1000022570" description="Chorismate synthase">
    <location>
        <begin position="1"/>
        <end position="365"/>
    </location>
</feature>
<feature type="binding site" evidence="1">
    <location>
        <position position="48"/>
    </location>
    <ligand>
        <name>NADP(+)</name>
        <dbReference type="ChEBI" id="CHEBI:58349"/>
    </ligand>
</feature>
<feature type="binding site" evidence="1">
    <location>
        <position position="54"/>
    </location>
    <ligand>
        <name>NADP(+)</name>
        <dbReference type="ChEBI" id="CHEBI:58349"/>
    </ligand>
</feature>
<feature type="binding site" evidence="1">
    <location>
        <begin position="125"/>
        <end position="127"/>
    </location>
    <ligand>
        <name>FMN</name>
        <dbReference type="ChEBI" id="CHEBI:58210"/>
    </ligand>
</feature>
<feature type="binding site" evidence="1">
    <location>
        <begin position="237"/>
        <end position="238"/>
    </location>
    <ligand>
        <name>FMN</name>
        <dbReference type="ChEBI" id="CHEBI:58210"/>
    </ligand>
</feature>
<feature type="binding site" evidence="1">
    <location>
        <position position="277"/>
    </location>
    <ligand>
        <name>FMN</name>
        <dbReference type="ChEBI" id="CHEBI:58210"/>
    </ligand>
</feature>
<feature type="binding site" evidence="1">
    <location>
        <begin position="292"/>
        <end position="296"/>
    </location>
    <ligand>
        <name>FMN</name>
        <dbReference type="ChEBI" id="CHEBI:58210"/>
    </ligand>
</feature>
<feature type="binding site" evidence="1">
    <location>
        <position position="318"/>
    </location>
    <ligand>
        <name>FMN</name>
        <dbReference type="ChEBI" id="CHEBI:58210"/>
    </ligand>
</feature>